<gene>
    <name type="primary">pacC</name>
</gene>
<accession>Q96UW0</accession>
<name>PACC_ASPPA</name>
<feature type="chain" id="PRO_0000046823" description="pH-response transcription factor pacC/RIM101">
    <location>
        <begin position="1"/>
        <end position="662"/>
    </location>
</feature>
<feature type="zinc finger region" description="C2H2-type 1" evidence="2">
    <location>
        <begin position="68"/>
        <end position="93"/>
    </location>
</feature>
<feature type="zinc finger region" description="C2H2-type 2" evidence="2">
    <location>
        <begin position="104"/>
        <end position="128"/>
    </location>
</feature>
<feature type="zinc finger region" description="C2H2-type 3" evidence="2">
    <location>
        <begin position="134"/>
        <end position="156"/>
    </location>
</feature>
<feature type="region of interest" description="Disordered" evidence="3">
    <location>
        <begin position="1"/>
        <end position="42"/>
    </location>
</feature>
<feature type="region of interest" description="Disordered" evidence="3">
    <location>
        <begin position="370"/>
        <end position="541"/>
    </location>
</feature>
<feature type="region of interest" description="Disordered" evidence="3">
    <location>
        <begin position="595"/>
        <end position="662"/>
    </location>
</feature>
<feature type="short sequence motif" description="YPX[LI] motif 1">
    <location>
        <begin position="450"/>
        <end position="453"/>
    </location>
</feature>
<feature type="short sequence motif" description="YPX[LI] motif 2">
    <location>
        <begin position="646"/>
        <end position="649"/>
    </location>
</feature>
<feature type="compositionally biased region" description="Low complexity" evidence="3">
    <location>
        <begin position="7"/>
        <end position="42"/>
    </location>
</feature>
<feature type="compositionally biased region" description="Polar residues" evidence="3">
    <location>
        <begin position="404"/>
        <end position="438"/>
    </location>
</feature>
<feature type="compositionally biased region" description="Basic and acidic residues" evidence="3">
    <location>
        <begin position="498"/>
        <end position="523"/>
    </location>
</feature>
<feature type="compositionally biased region" description="Basic and acidic residues" evidence="3">
    <location>
        <begin position="595"/>
        <end position="619"/>
    </location>
</feature>
<comment type="function">
    <text evidence="1">Transcription factor that mediates regulation of both acid- and alkaline-expressed genes in response to ambient pH. At alkaline ambient pH, activates transcription of alkaline-expressed genes (including pacC itself) and represses transcription of acid-expressed genes (By similarity).</text>
</comment>
<comment type="subcellular location">
    <subcellularLocation>
        <location evidence="1">Cytoplasm</location>
    </subcellularLocation>
    <subcellularLocation>
        <location evidence="1">Nucleus</location>
    </subcellularLocation>
</comment>
<comment type="PTM">
    <text evidence="1">Activated by C-terminal proteolytic cleavage by signaling protease (probably palB/RIM13) at neutral to alkaline ambient pH.</text>
</comment>
<comment type="similarity">
    <text evidence="4">Belongs to the pacC/RIM101 family.</text>
</comment>
<reference key="1">
    <citation type="submission" date="2001-08" db="EMBL/GenBank/DDBJ databases">
        <title>Isolation and characterization of the Aspergillus parasiticus pacC gene.</title>
        <authorList>
            <person name="Pinero D."/>
            <person name="Keller N.P."/>
        </authorList>
    </citation>
    <scope>NUCLEOTIDE SEQUENCE [GENOMIC DNA]</scope>
    <source>
        <strain>ATCC 90816 / SK1</strain>
    </source>
</reference>
<proteinExistence type="inferred from homology"/>
<sequence length="662" mass="70854">MSEPQDTTSPSTAAAPITASTSQEQSQTQSPPQVSATTTSSVTATAAAATAAVASPPVNGAARPTEELSCLWQGCSEKCPTPESLYEHVCERHVGRKSTNNLNLTCQWGSCRTTTVKRDHITSHIRVHVPLKLHKCDFCGKAFKRPQDLKKHVKTHADDSVLVRSPEPGSRNPDIMFGGNPAKGYATATHYFEPALNPVPSQGYAHGAPQYYQAHHPPQPANPSYGNVYYALNHGHEAGHASYESKKRGYDALNEFFGDLKRRQFDPNSYAAVGQRLLGLQSLSLPILSGGPLPEYQPMPAPVAVGGGGYSPGGHPPAPAYHLPPMSNVRTKNDLINIDQFLQQMQDTIYENDDNVAAAGVAQPGAHYVHGGMSYRTTHSPPSQLPPSHATATTSAGPMMANPATHSPTGTPALTPPSSAQSYTSGRSPISLPSTSRVSPPHHEGGSSMYPRLPSATMPDSMTAGYPTTSSAAPPSTLGGIFDHDDRRRYTGGTLQRARPEERHLPEPMDLSHDNKDDGERTPPAKPRQAPSSPGRISASLIDPALSGSANEAETMRTAQAATEVAERSDVQWVEKVRLIEYLRNYIASRLERGEYDGDSGMTRESRTPEAGPDGHMEGVETEPVSHPAKSESPVKPEAGGDTVMYPTLRGVDEDGDSKMPN</sequence>
<organism>
    <name type="scientific">Aspergillus parasiticus</name>
    <dbReference type="NCBI Taxonomy" id="5067"/>
    <lineage>
        <taxon>Eukaryota</taxon>
        <taxon>Fungi</taxon>
        <taxon>Dikarya</taxon>
        <taxon>Ascomycota</taxon>
        <taxon>Pezizomycotina</taxon>
        <taxon>Eurotiomycetes</taxon>
        <taxon>Eurotiomycetidae</taxon>
        <taxon>Eurotiales</taxon>
        <taxon>Aspergillaceae</taxon>
        <taxon>Aspergillus</taxon>
        <taxon>Aspergillus subgen. Circumdati</taxon>
    </lineage>
</organism>
<dbReference type="EMBL" id="AF408430">
    <property type="protein sequence ID" value="AAK98616.1"/>
    <property type="molecule type" value="Genomic_DNA"/>
</dbReference>
<dbReference type="VEuPathDB" id="FungiDB:BDV34DRAFT_145459"/>
<dbReference type="GO" id="GO:0005737">
    <property type="term" value="C:cytoplasm"/>
    <property type="evidence" value="ECO:0007669"/>
    <property type="project" value="UniProtKB-SubCell"/>
</dbReference>
<dbReference type="GO" id="GO:0005634">
    <property type="term" value="C:nucleus"/>
    <property type="evidence" value="ECO:0007669"/>
    <property type="project" value="UniProtKB-SubCell"/>
</dbReference>
<dbReference type="GO" id="GO:0003677">
    <property type="term" value="F:DNA binding"/>
    <property type="evidence" value="ECO:0007669"/>
    <property type="project" value="UniProtKB-KW"/>
</dbReference>
<dbReference type="GO" id="GO:0008270">
    <property type="term" value="F:zinc ion binding"/>
    <property type="evidence" value="ECO:0007669"/>
    <property type="project" value="UniProtKB-KW"/>
</dbReference>
<dbReference type="GO" id="GO:0045944">
    <property type="term" value="P:positive regulation of transcription by RNA polymerase II"/>
    <property type="evidence" value="ECO:0007669"/>
    <property type="project" value="TreeGrafter"/>
</dbReference>
<dbReference type="FunFam" id="3.30.160.60:FF:000993">
    <property type="entry name" value="pH-response transcription factor pacC/RIM101"/>
    <property type="match status" value="1"/>
</dbReference>
<dbReference type="FunFam" id="3.30.160.60:FF:001369">
    <property type="entry name" value="pH-response transcription factor pacC/RIM101"/>
    <property type="match status" value="1"/>
</dbReference>
<dbReference type="Gene3D" id="3.30.160.60">
    <property type="entry name" value="Classic Zinc Finger"/>
    <property type="match status" value="2"/>
</dbReference>
<dbReference type="InterPro" id="IPR050806">
    <property type="entry name" value="pacC/RIM101"/>
</dbReference>
<dbReference type="InterPro" id="IPR036236">
    <property type="entry name" value="Znf_C2H2_sf"/>
</dbReference>
<dbReference type="InterPro" id="IPR013087">
    <property type="entry name" value="Znf_C2H2_type"/>
</dbReference>
<dbReference type="PANTHER" id="PTHR47257">
    <property type="entry name" value="PH-RESPONSE TRANSCRIPTION FACTOR PACC/RIM101"/>
    <property type="match status" value="1"/>
</dbReference>
<dbReference type="PANTHER" id="PTHR47257:SF1">
    <property type="entry name" value="PH-RESPONSE TRANSCRIPTION FACTOR PACC_RIM101"/>
    <property type="match status" value="1"/>
</dbReference>
<dbReference type="SMART" id="SM00355">
    <property type="entry name" value="ZnF_C2H2"/>
    <property type="match status" value="3"/>
</dbReference>
<dbReference type="SUPFAM" id="SSF57667">
    <property type="entry name" value="beta-beta-alpha zinc fingers"/>
    <property type="match status" value="1"/>
</dbReference>
<dbReference type="PROSITE" id="PS00028">
    <property type="entry name" value="ZINC_FINGER_C2H2_1"/>
    <property type="match status" value="2"/>
</dbReference>
<dbReference type="PROSITE" id="PS50157">
    <property type="entry name" value="ZINC_FINGER_C2H2_2"/>
    <property type="match status" value="1"/>
</dbReference>
<keyword id="KW-0010">Activator</keyword>
<keyword id="KW-0963">Cytoplasm</keyword>
<keyword id="KW-0238">DNA-binding</keyword>
<keyword id="KW-0479">Metal-binding</keyword>
<keyword id="KW-0539">Nucleus</keyword>
<keyword id="KW-0677">Repeat</keyword>
<keyword id="KW-0678">Repressor</keyword>
<keyword id="KW-0804">Transcription</keyword>
<keyword id="KW-0805">Transcription regulation</keyword>
<keyword id="KW-0862">Zinc</keyword>
<keyword id="KW-0863">Zinc-finger</keyword>
<protein>
    <recommendedName>
        <fullName>pH-response transcription factor pacC/RIM101</fullName>
    </recommendedName>
</protein>
<evidence type="ECO:0000250" key="1"/>
<evidence type="ECO:0000255" key="2">
    <source>
        <dbReference type="PROSITE-ProRule" id="PRU00042"/>
    </source>
</evidence>
<evidence type="ECO:0000256" key="3">
    <source>
        <dbReference type="SAM" id="MobiDB-lite"/>
    </source>
</evidence>
<evidence type="ECO:0000305" key="4"/>